<name>LPLA2_STAAM</name>
<dbReference type="EC" id="6.3.1.20" evidence="4"/>
<dbReference type="EMBL" id="BA000017">
    <property type="protein sequence ID" value="BAB56489.1"/>
    <property type="molecule type" value="Genomic_DNA"/>
</dbReference>
<dbReference type="RefSeq" id="WP_000280799.1">
    <property type="nucleotide sequence ID" value="NC_002758.2"/>
</dbReference>
<dbReference type="SMR" id="A0A0H3JX98"/>
<dbReference type="KEGG" id="sav:SAV0327"/>
<dbReference type="HOGENOM" id="CLU_022986_0_2_9"/>
<dbReference type="PhylomeDB" id="A0A0H3JX98"/>
<dbReference type="UniPathway" id="UPA00537">
    <property type="reaction ID" value="UER00594"/>
</dbReference>
<dbReference type="UniPathway" id="UPA00537">
    <property type="reaction ID" value="UER00595"/>
</dbReference>
<dbReference type="Proteomes" id="UP000002481">
    <property type="component" value="Chromosome"/>
</dbReference>
<dbReference type="GO" id="GO:0005737">
    <property type="term" value="C:cytoplasm"/>
    <property type="evidence" value="ECO:0007669"/>
    <property type="project" value="TreeGrafter"/>
</dbReference>
<dbReference type="GO" id="GO:0005524">
    <property type="term" value="F:ATP binding"/>
    <property type="evidence" value="ECO:0007669"/>
    <property type="project" value="UniProtKB-KW"/>
</dbReference>
<dbReference type="GO" id="GO:0016979">
    <property type="term" value="F:lipoate-protein ligase activity"/>
    <property type="evidence" value="ECO:0000314"/>
    <property type="project" value="UniProtKB"/>
</dbReference>
<dbReference type="GO" id="GO:0017118">
    <property type="term" value="F:lipoyltransferase activity"/>
    <property type="evidence" value="ECO:0007669"/>
    <property type="project" value="TreeGrafter"/>
</dbReference>
<dbReference type="GO" id="GO:0009249">
    <property type="term" value="P:protein lipoylation"/>
    <property type="evidence" value="ECO:0000314"/>
    <property type="project" value="UniProtKB"/>
</dbReference>
<dbReference type="CDD" id="cd16443">
    <property type="entry name" value="LplA"/>
    <property type="match status" value="1"/>
</dbReference>
<dbReference type="FunFam" id="3.30.930.10:FF:000072">
    <property type="entry name" value="Lipoate--protein ligase"/>
    <property type="match status" value="1"/>
</dbReference>
<dbReference type="Gene3D" id="3.30.930.10">
    <property type="entry name" value="Bira Bifunctional Protein, Domain 2"/>
    <property type="match status" value="1"/>
</dbReference>
<dbReference type="Gene3D" id="3.30.390.50">
    <property type="entry name" value="CO dehydrogenase flavoprotein, C-terminal domain"/>
    <property type="match status" value="1"/>
</dbReference>
<dbReference type="InterPro" id="IPR045864">
    <property type="entry name" value="aa-tRNA-synth_II/BPL/LPL"/>
</dbReference>
<dbReference type="InterPro" id="IPR004143">
    <property type="entry name" value="BPL_LPL_catalytic"/>
</dbReference>
<dbReference type="InterPro" id="IPR019491">
    <property type="entry name" value="Lipoate_protein_ligase_C"/>
</dbReference>
<dbReference type="InterPro" id="IPR004562">
    <property type="entry name" value="LipoylTrfase_LipoateP_Ligase"/>
</dbReference>
<dbReference type="NCBIfam" id="TIGR00545">
    <property type="entry name" value="lipoyltrans"/>
    <property type="match status" value="1"/>
</dbReference>
<dbReference type="PANTHER" id="PTHR12561">
    <property type="entry name" value="LIPOATE-PROTEIN LIGASE"/>
    <property type="match status" value="1"/>
</dbReference>
<dbReference type="PANTHER" id="PTHR12561:SF3">
    <property type="entry name" value="LIPOYLTRANSFERASE 1, MITOCHONDRIAL"/>
    <property type="match status" value="1"/>
</dbReference>
<dbReference type="Pfam" id="PF10437">
    <property type="entry name" value="Lip_prot_lig_C"/>
    <property type="match status" value="1"/>
</dbReference>
<dbReference type="Pfam" id="PF21948">
    <property type="entry name" value="LplA-B_cat"/>
    <property type="match status" value="1"/>
</dbReference>
<dbReference type="SUPFAM" id="SSF55681">
    <property type="entry name" value="Class II aaRS and biotin synthetases"/>
    <property type="match status" value="1"/>
</dbReference>
<dbReference type="SUPFAM" id="SSF82649">
    <property type="entry name" value="SufE/NifU"/>
    <property type="match status" value="1"/>
</dbReference>
<dbReference type="PROSITE" id="PS51733">
    <property type="entry name" value="BPL_LPL_CATALYTIC"/>
    <property type="match status" value="1"/>
</dbReference>
<keyword id="KW-0067">ATP-binding</keyword>
<keyword id="KW-0175">Coiled coil</keyword>
<keyword id="KW-0436">Ligase</keyword>
<keyword id="KW-0547">Nucleotide-binding</keyword>
<sequence length="340" mass="38921">MYLIEPIRNGEYITDGAIALAMQVYVNQHIFLDEDILFPYYCDPKVEIGRFQNTAIEVNQDYIDKHSIQVVRRDTGGGAVYVDKGAVNMCCILEQDTSIYGDFQRFYQPAIKALHTLGATDVIQSGRNDLTLNGKKVSGAAMTLMNNRIYGGYSLLLDVNYEAMDKVLKPNRKKIASKGIKSVRARVGHLREALDEKYRDITIEEFKNLMVTQILGIDDIKEAKRYELTDADWEAIDELADKKYKNWDWNYGKSPKYEYNRSERLSSGTVDITISVEQNRIADCRIYGDFFGQGDIKDVEEALQGTKMTREDLMHQLKQLDIVYYFGNVTVESLVEMILS</sequence>
<accession>A0A0H3JX98</accession>
<gene>
    <name evidence="8" type="ordered locus">SAV0327</name>
</gene>
<organism>
    <name type="scientific">Staphylococcus aureus (strain Mu50 / ATCC 700699)</name>
    <dbReference type="NCBI Taxonomy" id="158878"/>
    <lineage>
        <taxon>Bacteria</taxon>
        <taxon>Bacillati</taxon>
        <taxon>Bacillota</taxon>
        <taxon>Bacilli</taxon>
        <taxon>Bacillales</taxon>
        <taxon>Staphylococcaceae</taxon>
        <taxon>Staphylococcus</taxon>
    </lineage>
</organism>
<comment type="function">
    <text evidence="4">Catalyzes specifically the lipoylation of GcvH-L (SAV0324), likely via the ATP-dependent activation of lipoate to lipoyl-AMP and the transfer of the activated lipoyl onto the lipoyl domain of the target protein. Can also utilize lipoamide as substrate for GcvH-L modification.</text>
</comment>
<comment type="catalytic activity">
    <reaction evidence="4">
        <text>L-lysyl-[lipoyl-carrier protein] + (R)-lipoate + ATP = N(6)-[(R)-lipoyl]-L-lysyl-[lipoyl-carrier protein] + AMP + diphosphate + H(+)</text>
        <dbReference type="Rhea" id="RHEA:49288"/>
        <dbReference type="Rhea" id="RHEA-COMP:10500"/>
        <dbReference type="Rhea" id="RHEA-COMP:10502"/>
        <dbReference type="ChEBI" id="CHEBI:15378"/>
        <dbReference type="ChEBI" id="CHEBI:29969"/>
        <dbReference type="ChEBI" id="CHEBI:30616"/>
        <dbReference type="ChEBI" id="CHEBI:33019"/>
        <dbReference type="ChEBI" id="CHEBI:83088"/>
        <dbReference type="ChEBI" id="CHEBI:83099"/>
        <dbReference type="ChEBI" id="CHEBI:456215"/>
        <dbReference type="EC" id="6.3.1.20"/>
    </reaction>
</comment>
<comment type="pathway">
    <text evidence="7">Protein modification; protein lipoylation via exogenous pathway; protein N(6)-(lipoyl)lysine from lipoate: step 1/2.</text>
</comment>
<comment type="pathway">
    <text evidence="7">Protein modification; protein lipoylation via exogenous pathway; protein N(6)-(lipoyl)lysine from lipoate: step 2/2.</text>
</comment>
<comment type="similarity">
    <text evidence="6">Belongs to the LplA family.</text>
</comment>
<reference key="1">
    <citation type="journal article" date="2001" name="Lancet">
        <title>Whole genome sequencing of meticillin-resistant Staphylococcus aureus.</title>
        <authorList>
            <person name="Kuroda M."/>
            <person name="Ohta T."/>
            <person name="Uchiyama I."/>
            <person name="Baba T."/>
            <person name="Yuzawa H."/>
            <person name="Kobayashi I."/>
            <person name="Cui L."/>
            <person name="Oguchi A."/>
            <person name="Aoki K."/>
            <person name="Nagai Y."/>
            <person name="Lian J.-Q."/>
            <person name="Ito T."/>
            <person name="Kanamori M."/>
            <person name="Matsumaru H."/>
            <person name="Maruyama A."/>
            <person name="Murakami H."/>
            <person name="Hosoyama A."/>
            <person name="Mizutani-Ui Y."/>
            <person name="Takahashi N.K."/>
            <person name="Sawano T."/>
            <person name="Inoue R."/>
            <person name="Kaito C."/>
            <person name="Sekimizu K."/>
            <person name="Hirakawa H."/>
            <person name="Kuhara S."/>
            <person name="Goto S."/>
            <person name="Yabuzaki J."/>
            <person name="Kanehisa M."/>
            <person name="Yamashita A."/>
            <person name="Oshima K."/>
            <person name="Furuya K."/>
            <person name="Yoshino C."/>
            <person name="Shiba T."/>
            <person name="Hattori M."/>
            <person name="Ogasawara N."/>
            <person name="Hayashi H."/>
            <person name="Hiramatsu K."/>
        </authorList>
    </citation>
    <scope>NUCLEOTIDE SEQUENCE [LARGE SCALE GENOMIC DNA]</scope>
    <source>
        <strain>Mu50 / ATCC 700699</strain>
    </source>
</reference>
<reference key="2">
    <citation type="journal article" date="2015" name="Mol. Cell">
        <title>Identification of a class of protein ADP-ribosylating sirtuins in microbial pathogens.</title>
        <authorList>
            <person name="Rack J.G."/>
            <person name="Morra R."/>
            <person name="Barkauskaite E."/>
            <person name="Kraehenbuehl R."/>
            <person name="Ariza A."/>
            <person name="Qu Y."/>
            <person name="Ortmayer M."/>
            <person name="Leidecker O."/>
            <person name="Cameron D.R."/>
            <person name="Matic I."/>
            <person name="Peleg A.Y."/>
            <person name="Leys D."/>
            <person name="Traven A."/>
            <person name="Ahel I."/>
        </authorList>
    </citation>
    <scope>FUNCTION</scope>
    <scope>CATALYTIC ACTIVITY</scope>
    <scope>SUBSTRATE SPECIFICITY</scope>
    <scope>MUTAGENESIS OF ASP-129 AND LYS-135</scope>
    <scope>PATHWAY</scope>
    <source>
        <strain>Mu50 / ATCC 700699</strain>
    </source>
</reference>
<protein>
    <recommendedName>
        <fullName evidence="5">Lipoate--protein ligase 2</fullName>
        <ecNumber evidence="4">6.3.1.20</ecNumber>
    </recommendedName>
    <alternativeName>
        <fullName evidence="5">LplA2</fullName>
    </alternativeName>
</protein>
<evidence type="ECO:0000250" key="1">
    <source>
        <dbReference type="UniProtKB" id="Q9HKT1"/>
    </source>
</evidence>
<evidence type="ECO:0000255" key="2"/>
<evidence type="ECO:0000255" key="3">
    <source>
        <dbReference type="PROSITE-ProRule" id="PRU01067"/>
    </source>
</evidence>
<evidence type="ECO:0000269" key="4">
    <source>
    </source>
</evidence>
<evidence type="ECO:0000303" key="5">
    <source>
    </source>
</evidence>
<evidence type="ECO:0000305" key="6"/>
<evidence type="ECO:0000305" key="7">
    <source>
    </source>
</evidence>
<evidence type="ECO:0000312" key="8">
    <source>
        <dbReference type="EMBL" id="BAB56489.1"/>
    </source>
</evidence>
<feature type="chain" id="PRO_0000435347" description="Lipoate--protein ligase 2">
    <location>
        <begin position="1"/>
        <end position="340"/>
    </location>
</feature>
<feature type="domain" description="BPL/LPL catalytic" evidence="3">
    <location>
        <begin position="31"/>
        <end position="222"/>
    </location>
</feature>
<feature type="coiled-coil region" evidence="2">
    <location>
        <begin position="293"/>
        <end position="321"/>
    </location>
</feature>
<feature type="binding site" evidence="1">
    <location>
        <position position="73"/>
    </location>
    <ligand>
        <name>ATP</name>
        <dbReference type="ChEBI" id="CHEBI:30616"/>
    </ligand>
</feature>
<feature type="binding site" evidence="1">
    <location>
        <begin position="78"/>
        <end position="81"/>
    </location>
    <ligand>
        <name>ATP</name>
        <dbReference type="ChEBI" id="CHEBI:30616"/>
    </ligand>
</feature>
<feature type="binding site" evidence="1">
    <location>
        <position position="136"/>
    </location>
    <ligand>
        <name>(R)-lipoate</name>
        <dbReference type="ChEBI" id="CHEBI:83088"/>
    </ligand>
</feature>
<feature type="binding site" evidence="1">
    <location>
        <position position="136"/>
    </location>
    <ligand>
        <name>ATP</name>
        <dbReference type="ChEBI" id="CHEBI:30616"/>
    </ligand>
</feature>
<feature type="binding site" evidence="1">
    <location>
        <position position="140"/>
    </location>
    <ligand>
        <name>ATP</name>
        <dbReference type="ChEBI" id="CHEBI:30616"/>
    </ligand>
</feature>
<feature type="mutagenesis site" description="Reduces enzymatic activity." evidence="4">
    <original>D</original>
    <variation>A</variation>
    <location>
        <position position="129"/>
    </location>
</feature>
<feature type="mutagenesis site" description="Reduces enzymatic activity." evidence="4">
    <original>K</original>
    <variation>R</variation>
    <location>
        <position position="135"/>
    </location>
</feature>
<proteinExistence type="evidence at protein level"/>